<comment type="function">
    <text evidence="1">Transcription regulator that activates transcription by stimulating RNA polymerase (RNAP) recycling in case of stress conditions such as supercoiled DNA or high salt concentrations. Probably acts by releasing the RNAP, when it is trapped or immobilized on tightly supercoiled DNA. Does not activate transcription on linear DNA. Probably not involved in DNA repair.</text>
</comment>
<comment type="subunit">
    <text evidence="1">Interacts with the RNAP. Has a higher affinity for the core RNAP than for the holoenzyme. Its ATPase activity is stimulated by binding to RNAP.</text>
</comment>
<comment type="similarity">
    <text evidence="1">Belongs to the SNF2/RAD54 helicase family. RapA subfamily.</text>
</comment>
<name>RAPA_PHOPR</name>
<proteinExistence type="inferred from homology"/>
<organism>
    <name type="scientific">Photobacterium profundum (strain SS9)</name>
    <dbReference type="NCBI Taxonomy" id="298386"/>
    <lineage>
        <taxon>Bacteria</taxon>
        <taxon>Pseudomonadati</taxon>
        <taxon>Pseudomonadota</taxon>
        <taxon>Gammaproteobacteria</taxon>
        <taxon>Vibrionales</taxon>
        <taxon>Vibrionaceae</taxon>
        <taxon>Photobacterium</taxon>
    </lineage>
</organism>
<protein>
    <recommendedName>
        <fullName evidence="1">RNA polymerase-associated protein RapA</fullName>
        <ecNumber evidence="1">3.6.4.-</ecNumber>
    </recommendedName>
    <alternativeName>
        <fullName evidence="1">ATP-dependent helicase HepA</fullName>
    </alternativeName>
</protein>
<evidence type="ECO:0000255" key="1">
    <source>
        <dbReference type="HAMAP-Rule" id="MF_01821"/>
    </source>
</evidence>
<gene>
    <name evidence="1" type="primary">rapA</name>
    <name type="ordered locus">PBPRA0409</name>
</gene>
<feature type="chain" id="PRO_0000207180" description="RNA polymerase-associated protein RapA">
    <location>
        <begin position="1"/>
        <end position="972"/>
    </location>
</feature>
<feature type="domain" description="Helicase ATP-binding" evidence="1">
    <location>
        <begin position="164"/>
        <end position="334"/>
    </location>
</feature>
<feature type="domain" description="Helicase C-terminal" evidence="1">
    <location>
        <begin position="493"/>
        <end position="671"/>
    </location>
</feature>
<feature type="short sequence motif" description="DEAH box">
    <location>
        <begin position="280"/>
        <end position="283"/>
    </location>
</feature>
<feature type="binding site" evidence="1">
    <location>
        <begin position="177"/>
        <end position="184"/>
    </location>
    <ligand>
        <name>ATP</name>
        <dbReference type="ChEBI" id="CHEBI:30616"/>
    </ligand>
</feature>
<accession>Q6LV34</accession>
<reference key="1">
    <citation type="journal article" date="2005" name="Science">
        <title>Life at depth: Photobacterium profundum genome sequence and expression analysis.</title>
        <authorList>
            <person name="Vezzi A."/>
            <person name="Campanaro S."/>
            <person name="D'Angelo M."/>
            <person name="Simonato F."/>
            <person name="Vitulo N."/>
            <person name="Lauro F.M."/>
            <person name="Cestaro A."/>
            <person name="Malacrida G."/>
            <person name="Simionati B."/>
            <person name="Cannata N."/>
            <person name="Romualdi C."/>
            <person name="Bartlett D.H."/>
            <person name="Valle G."/>
        </authorList>
    </citation>
    <scope>NUCLEOTIDE SEQUENCE [LARGE SCALE GENOMIC DNA]</scope>
    <source>
        <strain>ATCC BAA-1253 / SS9</strain>
    </source>
</reference>
<dbReference type="EC" id="3.6.4.-" evidence="1"/>
<dbReference type="EMBL" id="CR378664">
    <property type="protein sequence ID" value="CAG18841.1"/>
    <property type="molecule type" value="Genomic_DNA"/>
</dbReference>
<dbReference type="RefSeq" id="WP_011217198.1">
    <property type="nucleotide sequence ID" value="NC_006370.1"/>
</dbReference>
<dbReference type="SMR" id="Q6LV34"/>
<dbReference type="STRING" id="298386.PBPRA0409"/>
<dbReference type="KEGG" id="ppr:PBPRA0409"/>
<dbReference type="eggNOG" id="COG0553">
    <property type="taxonomic scope" value="Bacteria"/>
</dbReference>
<dbReference type="HOGENOM" id="CLU_011520_0_0_6"/>
<dbReference type="Proteomes" id="UP000000593">
    <property type="component" value="Chromosome 1"/>
</dbReference>
<dbReference type="GO" id="GO:0005524">
    <property type="term" value="F:ATP binding"/>
    <property type="evidence" value="ECO:0007669"/>
    <property type="project" value="UniProtKB-UniRule"/>
</dbReference>
<dbReference type="GO" id="GO:0003677">
    <property type="term" value="F:DNA binding"/>
    <property type="evidence" value="ECO:0007669"/>
    <property type="project" value="UniProtKB-KW"/>
</dbReference>
<dbReference type="GO" id="GO:0004386">
    <property type="term" value="F:helicase activity"/>
    <property type="evidence" value="ECO:0007669"/>
    <property type="project" value="UniProtKB-UniRule"/>
</dbReference>
<dbReference type="GO" id="GO:0016817">
    <property type="term" value="F:hydrolase activity, acting on acid anhydrides"/>
    <property type="evidence" value="ECO:0007669"/>
    <property type="project" value="InterPro"/>
</dbReference>
<dbReference type="GO" id="GO:0006355">
    <property type="term" value="P:regulation of DNA-templated transcription"/>
    <property type="evidence" value="ECO:0007669"/>
    <property type="project" value="UniProtKB-UniRule"/>
</dbReference>
<dbReference type="CDD" id="cd18011">
    <property type="entry name" value="DEXDc_RapA"/>
    <property type="match status" value="1"/>
</dbReference>
<dbReference type="CDD" id="cd18793">
    <property type="entry name" value="SF2_C_SNF"/>
    <property type="match status" value="1"/>
</dbReference>
<dbReference type="Gene3D" id="2.30.30.140">
    <property type="match status" value="1"/>
</dbReference>
<dbReference type="Gene3D" id="2.30.30.930">
    <property type="match status" value="1"/>
</dbReference>
<dbReference type="Gene3D" id="3.30.360.80">
    <property type="match status" value="1"/>
</dbReference>
<dbReference type="Gene3D" id="6.10.140.1500">
    <property type="match status" value="1"/>
</dbReference>
<dbReference type="Gene3D" id="6.10.140.2230">
    <property type="match status" value="1"/>
</dbReference>
<dbReference type="Gene3D" id="3.40.50.300">
    <property type="entry name" value="P-loop containing nucleotide triphosphate hydrolases"/>
    <property type="match status" value="1"/>
</dbReference>
<dbReference type="Gene3D" id="3.40.50.10810">
    <property type="entry name" value="Tandem AAA-ATPase domain"/>
    <property type="match status" value="1"/>
</dbReference>
<dbReference type="HAMAP" id="MF_01821">
    <property type="entry name" value="Helicase_RapA"/>
    <property type="match status" value="1"/>
</dbReference>
<dbReference type="InterPro" id="IPR014001">
    <property type="entry name" value="Helicase_ATP-bd"/>
</dbReference>
<dbReference type="InterPro" id="IPR001650">
    <property type="entry name" value="Helicase_C-like"/>
</dbReference>
<dbReference type="InterPro" id="IPR023949">
    <property type="entry name" value="Helicase_RapA"/>
</dbReference>
<dbReference type="InterPro" id="IPR027417">
    <property type="entry name" value="P-loop_NTPase"/>
</dbReference>
<dbReference type="InterPro" id="IPR022737">
    <property type="entry name" value="RapA_C"/>
</dbReference>
<dbReference type="InterPro" id="IPR038718">
    <property type="entry name" value="SNF2-like_sf"/>
</dbReference>
<dbReference type="InterPro" id="IPR049730">
    <property type="entry name" value="SNF2/RAD54-like_C"/>
</dbReference>
<dbReference type="InterPro" id="IPR000330">
    <property type="entry name" value="SNF2_N"/>
</dbReference>
<dbReference type="InterPro" id="IPR040765">
    <property type="entry name" value="Tudor_1_RapA"/>
</dbReference>
<dbReference type="InterPro" id="IPR040766">
    <property type="entry name" value="Tudor_2_RapA"/>
</dbReference>
<dbReference type="NCBIfam" id="NF003426">
    <property type="entry name" value="PRK04914.1"/>
    <property type="match status" value="1"/>
</dbReference>
<dbReference type="PANTHER" id="PTHR45766">
    <property type="entry name" value="DNA ANNEALING HELICASE AND ENDONUCLEASE ZRANB3 FAMILY MEMBER"/>
    <property type="match status" value="1"/>
</dbReference>
<dbReference type="PANTHER" id="PTHR45766:SF6">
    <property type="entry name" value="SWI_SNF-RELATED MATRIX-ASSOCIATED ACTIN-DEPENDENT REGULATOR OF CHROMATIN SUBFAMILY A-LIKE PROTEIN 1"/>
    <property type="match status" value="1"/>
</dbReference>
<dbReference type="Pfam" id="PF00271">
    <property type="entry name" value="Helicase_C"/>
    <property type="match status" value="1"/>
</dbReference>
<dbReference type="Pfam" id="PF12137">
    <property type="entry name" value="RapA_C"/>
    <property type="match status" value="1"/>
</dbReference>
<dbReference type="Pfam" id="PF00176">
    <property type="entry name" value="SNF2-rel_dom"/>
    <property type="match status" value="1"/>
</dbReference>
<dbReference type="Pfam" id="PF18339">
    <property type="entry name" value="Tudor_1_RapA"/>
    <property type="match status" value="1"/>
</dbReference>
<dbReference type="Pfam" id="PF18337">
    <property type="entry name" value="Tudor_RapA"/>
    <property type="match status" value="1"/>
</dbReference>
<dbReference type="SMART" id="SM00487">
    <property type="entry name" value="DEXDc"/>
    <property type="match status" value="1"/>
</dbReference>
<dbReference type="SMART" id="SM00490">
    <property type="entry name" value="HELICc"/>
    <property type="match status" value="1"/>
</dbReference>
<dbReference type="SUPFAM" id="SSF52540">
    <property type="entry name" value="P-loop containing nucleoside triphosphate hydrolases"/>
    <property type="match status" value="2"/>
</dbReference>
<dbReference type="PROSITE" id="PS51192">
    <property type="entry name" value="HELICASE_ATP_BIND_1"/>
    <property type="match status" value="1"/>
</dbReference>
<dbReference type="PROSITE" id="PS51194">
    <property type="entry name" value="HELICASE_CTER"/>
    <property type="match status" value="1"/>
</dbReference>
<sequence length="972" mass="109810">MPFTLGQRWISDTESDLGLGTVVAEDKRTVSIMFSACEESRLYARSDAPVTRVMFNVGDVVESHEGWSLEVKIVEENGGIFTYIGTRTDTEEENVKLREIFLSHQIRFNKPQDKLFAGQIDRMDRFALRYRALTNQYEQHKSPLRGLCGMRAGLIPHQLFIAHEVGRRYAPRVLLADEVGLGKTIEAGMIIHQQVLAGRAERILIVVPETLQHQWLVEMMRRFNLHFSIFDEERCVESLADATNPFETAQYVLCSLDFLRKSRRRFEQAQDADWDLLVVDEAHHLEWSEDKPSRQYQVVEALAEATPGVLLLTATPEQLGRESHFARLRLLDPDRFYDYDTFVEEERQYAPVAEAVTRLLSGEKIDDNARKTLVDLLSEQDIEPKLRLIESSDADDEHAQTVRHELIDSLMDRHGTGRVLFRNTRAAIKGFPERHLNMYPLELPSQYKTAMRVSSMMSGSISAEQKAIKLLYPEDIYQEFEGESATWWNFDPRVNWLLEMLKANRNEKVLVICSRAQTALTLEQALREREGIRATVFHEGMSIIDRDKAAAYFAQEDDGAQVLLCSEIGSEGRNFQFSNQLVMFDLPNNPDLLEQRIGRLDRIGQQRDIEIHVPHLEGTSQALLAHWYNEGLNSFEETCPTGRAVYEAVSDDLIALLACEKHEPEALENLIEKSAAMHHELKAKLDQGRDRLLEIHSNGGNAANDLVTQISSKDGDTNLIAFSLGLFDTIGLNQDDKGENAIVVTPSEHMMVASYPGLPYDGCTITFDRETALSREDLHFISWEHPMIQGGIDLLLSEGVGATAVSLLKNKALPAGTLLLEMVYVVDAQAPKSSGIGRFLPKTPIRILLDAKGNNLSNKVAFEGFNRQLSPVNRHLASKLVNSVQKEIHVLIAQAEQEVAKELVTVRESAQTEMENSLQAELTRLQALKAVNPNIRDDELELIESQIQDLTGYIGKAQIQLDSLRLIVVSHN</sequence>
<keyword id="KW-0010">Activator</keyword>
<keyword id="KW-0067">ATP-binding</keyword>
<keyword id="KW-0238">DNA-binding</keyword>
<keyword id="KW-0347">Helicase</keyword>
<keyword id="KW-0378">Hydrolase</keyword>
<keyword id="KW-0547">Nucleotide-binding</keyword>
<keyword id="KW-1185">Reference proteome</keyword>
<keyword id="KW-0804">Transcription</keyword>
<keyword id="KW-0805">Transcription regulation</keyword>